<accession>Q2NFX3</accession>
<sequence>MVKLADITEIIPIPEDVTVTINGSEVTVKGNGGEIKRNFNHNKITISNDEENVTVKVAFPNKKDKAMVGTIRSHISNMIYGVDHGFTYKMKIVYAHFPMTVKVQGKIVTIDNFLGERSPRKAKIIGDDVKVSVKGEDVTITGINKEHVGQTMANIEQATKIKGRDPRIFQDGIYLVDKRQEELE</sequence>
<organism>
    <name type="scientific">Methanosphaera stadtmanae (strain ATCC 43021 / DSM 3091 / JCM 11832 / MCB-3)</name>
    <dbReference type="NCBI Taxonomy" id="339860"/>
    <lineage>
        <taxon>Archaea</taxon>
        <taxon>Methanobacteriati</taxon>
        <taxon>Methanobacteriota</taxon>
        <taxon>Methanomada group</taxon>
        <taxon>Methanobacteria</taxon>
        <taxon>Methanobacteriales</taxon>
        <taxon>Methanobacteriaceae</taxon>
        <taxon>Methanosphaera</taxon>
    </lineage>
</organism>
<keyword id="KW-1185">Reference proteome</keyword>
<keyword id="KW-0687">Ribonucleoprotein</keyword>
<keyword id="KW-0689">Ribosomal protein</keyword>
<keyword id="KW-0694">RNA-binding</keyword>
<keyword id="KW-0699">rRNA-binding</keyword>
<name>RL6_METST</name>
<feature type="chain" id="PRO_0000260990" description="Large ribosomal subunit protein uL6">
    <location>
        <begin position="1"/>
        <end position="184"/>
    </location>
</feature>
<evidence type="ECO:0000255" key="1">
    <source>
        <dbReference type="HAMAP-Rule" id="MF_01365"/>
    </source>
</evidence>
<evidence type="ECO:0000305" key="2"/>
<gene>
    <name evidence="1" type="primary">rpl6</name>
    <name type="ordered locus">Msp_0892</name>
</gene>
<comment type="function">
    <text evidence="1">This protein binds to the 23S rRNA, and is important in its secondary structure. It is located near the subunit interface in the base of the L7/L12 stalk, and near the tRNA binding site of the peptidyltransferase center.</text>
</comment>
<comment type="subunit">
    <text evidence="1">Part of the 50S ribosomal subunit.</text>
</comment>
<comment type="similarity">
    <text evidence="1">Belongs to the universal ribosomal protein uL6 family.</text>
</comment>
<proteinExistence type="inferred from homology"/>
<reference key="1">
    <citation type="journal article" date="2006" name="J. Bacteriol.">
        <title>The genome sequence of Methanosphaera stadtmanae reveals why this human intestinal archaeon is restricted to methanol and H2 for methane formation and ATP synthesis.</title>
        <authorList>
            <person name="Fricke W.F."/>
            <person name="Seedorf H."/>
            <person name="Henne A."/>
            <person name="Kruer M."/>
            <person name="Liesegang H."/>
            <person name="Hedderich R."/>
            <person name="Gottschalk G."/>
            <person name="Thauer R.K."/>
        </authorList>
    </citation>
    <scope>NUCLEOTIDE SEQUENCE [LARGE SCALE GENOMIC DNA]</scope>
    <source>
        <strain>ATCC 43021 / DSM 3091 / JCM 11832 / MCB-3</strain>
    </source>
</reference>
<protein>
    <recommendedName>
        <fullName evidence="1">Large ribosomal subunit protein uL6</fullName>
    </recommendedName>
    <alternativeName>
        <fullName evidence="2">50S ribosomal protein L6</fullName>
    </alternativeName>
</protein>
<dbReference type="EMBL" id="CP000102">
    <property type="protein sequence ID" value="ABC57280.1"/>
    <property type="molecule type" value="Genomic_DNA"/>
</dbReference>
<dbReference type="RefSeq" id="WP_011406479.1">
    <property type="nucleotide sequence ID" value="NC_007681.1"/>
</dbReference>
<dbReference type="SMR" id="Q2NFX3"/>
<dbReference type="STRING" id="339860.Msp_0892"/>
<dbReference type="KEGG" id="mst:Msp_0892"/>
<dbReference type="eggNOG" id="arCOG04090">
    <property type="taxonomic scope" value="Archaea"/>
</dbReference>
<dbReference type="HOGENOM" id="CLU_065464_0_0_2"/>
<dbReference type="OrthoDB" id="7144at2157"/>
<dbReference type="Proteomes" id="UP000001931">
    <property type="component" value="Chromosome"/>
</dbReference>
<dbReference type="GO" id="GO:0022625">
    <property type="term" value="C:cytosolic large ribosomal subunit"/>
    <property type="evidence" value="ECO:0007669"/>
    <property type="project" value="TreeGrafter"/>
</dbReference>
<dbReference type="GO" id="GO:0019843">
    <property type="term" value="F:rRNA binding"/>
    <property type="evidence" value="ECO:0007669"/>
    <property type="project" value="UniProtKB-UniRule"/>
</dbReference>
<dbReference type="GO" id="GO:0003735">
    <property type="term" value="F:structural constituent of ribosome"/>
    <property type="evidence" value="ECO:0007669"/>
    <property type="project" value="InterPro"/>
</dbReference>
<dbReference type="GO" id="GO:0002181">
    <property type="term" value="P:cytoplasmic translation"/>
    <property type="evidence" value="ECO:0007669"/>
    <property type="project" value="TreeGrafter"/>
</dbReference>
<dbReference type="FunFam" id="3.90.930.12:FF:000008">
    <property type="entry name" value="50S ribosomal protein L6"/>
    <property type="match status" value="1"/>
</dbReference>
<dbReference type="FunFam" id="3.90.930.12:FF:000004">
    <property type="entry name" value="60S ribosomal protein L9"/>
    <property type="match status" value="1"/>
</dbReference>
<dbReference type="Gene3D" id="3.90.930.12">
    <property type="entry name" value="Ribosomal protein L6, alpha-beta domain"/>
    <property type="match status" value="2"/>
</dbReference>
<dbReference type="HAMAP" id="MF_01365_A">
    <property type="entry name" value="Ribosomal_uL6_A"/>
    <property type="match status" value="1"/>
</dbReference>
<dbReference type="InterPro" id="IPR000702">
    <property type="entry name" value="Ribosomal_uL6-like"/>
</dbReference>
<dbReference type="InterPro" id="IPR036789">
    <property type="entry name" value="Ribosomal_uL6-like_a/b-dom_sf"/>
</dbReference>
<dbReference type="InterPro" id="IPR020040">
    <property type="entry name" value="Ribosomal_uL6_a/b-dom"/>
</dbReference>
<dbReference type="InterPro" id="IPR019907">
    <property type="entry name" value="Ribosomal_uL6_arc"/>
</dbReference>
<dbReference type="InterPro" id="IPR002359">
    <property type="entry name" value="Ribosomal_uL6_CS2"/>
</dbReference>
<dbReference type="NCBIfam" id="NF004037">
    <property type="entry name" value="PRK05518.1"/>
    <property type="match status" value="1"/>
</dbReference>
<dbReference type="NCBIfam" id="TIGR03653">
    <property type="entry name" value="uL6_arch"/>
    <property type="match status" value="1"/>
</dbReference>
<dbReference type="PANTHER" id="PTHR11655:SF16">
    <property type="entry name" value="60S RIBOSOMAL PROTEIN L9"/>
    <property type="match status" value="1"/>
</dbReference>
<dbReference type="PANTHER" id="PTHR11655">
    <property type="entry name" value="60S/50S RIBOSOMAL PROTEIN L6/L9"/>
    <property type="match status" value="1"/>
</dbReference>
<dbReference type="Pfam" id="PF00347">
    <property type="entry name" value="Ribosomal_L6"/>
    <property type="match status" value="2"/>
</dbReference>
<dbReference type="PIRSF" id="PIRSF002162">
    <property type="entry name" value="Ribosomal_L6"/>
    <property type="match status" value="1"/>
</dbReference>
<dbReference type="SUPFAM" id="SSF56053">
    <property type="entry name" value="Ribosomal protein L6"/>
    <property type="match status" value="2"/>
</dbReference>
<dbReference type="PROSITE" id="PS00700">
    <property type="entry name" value="RIBOSOMAL_L6_2"/>
    <property type="match status" value="1"/>
</dbReference>